<gene>
    <name evidence="1" type="primary">rplA</name>
    <name type="ordered locus">EFER_3770</name>
</gene>
<keyword id="KW-0678">Repressor</keyword>
<keyword id="KW-0687">Ribonucleoprotein</keyword>
<keyword id="KW-0689">Ribosomal protein</keyword>
<keyword id="KW-0694">RNA-binding</keyword>
<keyword id="KW-0699">rRNA-binding</keyword>
<keyword id="KW-0810">Translation regulation</keyword>
<keyword id="KW-0820">tRNA-binding</keyword>
<comment type="function">
    <text evidence="1">Binds directly to 23S rRNA. The L1 stalk is quite mobile in the ribosome, and is involved in E site tRNA release.</text>
</comment>
<comment type="function">
    <text evidence="1">Protein L1 is also a translational repressor protein, it controls the translation of the L11 operon by binding to its mRNA.</text>
</comment>
<comment type="subunit">
    <text evidence="1">Part of the 50S ribosomal subunit.</text>
</comment>
<comment type="similarity">
    <text evidence="1">Belongs to the universal ribosomal protein uL1 family.</text>
</comment>
<proteinExistence type="inferred from homology"/>
<organism>
    <name type="scientific">Escherichia fergusonii (strain ATCC 35469 / DSM 13698 / CCUG 18766 / IAM 14443 / JCM 21226 / LMG 7866 / NBRC 102419 / NCTC 12128 / CDC 0568-73)</name>
    <dbReference type="NCBI Taxonomy" id="585054"/>
    <lineage>
        <taxon>Bacteria</taxon>
        <taxon>Pseudomonadati</taxon>
        <taxon>Pseudomonadota</taxon>
        <taxon>Gammaproteobacteria</taxon>
        <taxon>Enterobacterales</taxon>
        <taxon>Enterobacteriaceae</taxon>
        <taxon>Escherichia</taxon>
    </lineage>
</organism>
<name>RL1_ESCF3</name>
<protein>
    <recommendedName>
        <fullName evidence="1">Large ribosomal subunit protein uL1</fullName>
    </recommendedName>
    <alternativeName>
        <fullName evidence="2">50S ribosomal protein L1</fullName>
    </alternativeName>
</protein>
<evidence type="ECO:0000255" key="1">
    <source>
        <dbReference type="HAMAP-Rule" id="MF_01318"/>
    </source>
</evidence>
<evidence type="ECO:0000305" key="2"/>
<accession>B7LUL8</accession>
<sequence>MAKLTKRMRVIREKVDATKQYDINEAIALLKELATAKFVESVDVAVNLGIDARKSDQNVRGATVLPHGTGRSVRVAVFTQGANAEAAKAAGAELVGMEDLADQIKKGEMNFDVVIASPDAMRVVGQLGQVLGPRGLMPNPKVGTVTPNVAEAVKNAKAGQVRYRNDKNGIIHTTIGKVDFDADKLKENLEALLVALKKAKPTQAKGVYIKKVSISTTMGAGVAVDQAGLSASVN</sequence>
<feature type="chain" id="PRO_1000141405" description="Large ribosomal subunit protein uL1">
    <location>
        <begin position="1"/>
        <end position="234"/>
    </location>
</feature>
<reference key="1">
    <citation type="journal article" date="2009" name="PLoS Genet.">
        <title>Organised genome dynamics in the Escherichia coli species results in highly diverse adaptive paths.</title>
        <authorList>
            <person name="Touchon M."/>
            <person name="Hoede C."/>
            <person name="Tenaillon O."/>
            <person name="Barbe V."/>
            <person name="Baeriswyl S."/>
            <person name="Bidet P."/>
            <person name="Bingen E."/>
            <person name="Bonacorsi S."/>
            <person name="Bouchier C."/>
            <person name="Bouvet O."/>
            <person name="Calteau A."/>
            <person name="Chiapello H."/>
            <person name="Clermont O."/>
            <person name="Cruveiller S."/>
            <person name="Danchin A."/>
            <person name="Diard M."/>
            <person name="Dossat C."/>
            <person name="Karoui M.E."/>
            <person name="Frapy E."/>
            <person name="Garry L."/>
            <person name="Ghigo J.M."/>
            <person name="Gilles A.M."/>
            <person name="Johnson J."/>
            <person name="Le Bouguenec C."/>
            <person name="Lescat M."/>
            <person name="Mangenot S."/>
            <person name="Martinez-Jehanne V."/>
            <person name="Matic I."/>
            <person name="Nassif X."/>
            <person name="Oztas S."/>
            <person name="Petit M.A."/>
            <person name="Pichon C."/>
            <person name="Rouy Z."/>
            <person name="Ruf C.S."/>
            <person name="Schneider D."/>
            <person name="Tourret J."/>
            <person name="Vacherie B."/>
            <person name="Vallenet D."/>
            <person name="Medigue C."/>
            <person name="Rocha E.P.C."/>
            <person name="Denamur E."/>
        </authorList>
    </citation>
    <scope>NUCLEOTIDE SEQUENCE [LARGE SCALE GENOMIC DNA]</scope>
    <source>
        <strain>ATCC 35469 / DSM 13698 / BCRC 15582 / CCUG 18766 / IAM 14443 / JCM 21226 / LMG 7866 / NBRC 102419 / NCTC 12128 / CDC 0568-73</strain>
    </source>
</reference>
<dbReference type="EMBL" id="CU928158">
    <property type="protein sequence ID" value="CAQ91221.1"/>
    <property type="molecule type" value="Genomic_DNA"/>
</dbReference>
<dbReference type="RefSeq" id="WP_001096684.1">
    <property type="nucleotide sequence ID" value="NC_011740.1"/>
</dbReference>
<dbReference type="SMR" id="B7LUL8"/>
<dbReference type="GeneID" id="93777910"/>
<dbReference type="KEGG" id="efe:EFER_3770"/>
<dbReference type="HOGENOM" id="CLU_062853_0_0_6"/>
<dbReference type="OrthoDB" id="9803740at2"/>
<dbReference type="Proteomes" id="UP000000745">
    <property type="component" value="Chromosome"/>
</dbReference>
<dbReference type="GO" id="GO:0022625">
    <property type="term" value="C:cytosolic large ribosomal subunit"/>
    <property type="evidence" value="ECO:0007669"/>
    <property type="project" value="TreeGrafter"/>
</dbReference>
<dbReference type="GO" id="GO:0019843">
    <property type="term" value="F:rRNA binding"/>
    <property type="evidence" value="ECO:0007669"/>
    <property type="project" value="UniProtKB-UniRule"/>
</dbReference>
<dbReference type="GO" id="GO:0003735">
    <property type="term" value="F:structural constituent of ribosome"/>
    <property type="evidence" value="ECO:0007669"/>
    <property type="project" value="InterPro"/>
</dbReference>
<dbReference type="GO" id="GO:0000049">
    <property type="term" value="F:tRNA binding"/>
    <property type="evidence" value="ECO:0007669"/>
    <property type="project" value="UniProtKB-KW"/>
</dbReference>
<dbReference type="GO" id="GO:0006417">
    <property type="term" value="P:regulation of translation"/>
    <property type="evidence" value="ECO:0007669"/>
    <property type="project" value="UniProtKB-KW"/>
</dbReference>
<dbReference type="GO" id="GO:0006412">
    <property type="term" value="P:translation"/>
    <property type="evidence" value="ECO:0007669"/>
    <property type="project" value="UniProtKB-UniRule"/>
</dbReference>
<dbReference type="CDD" id="cd00403">
    <property type="entry name" value="Ribosomal_L1"/>
    <property type="match status" value="1"/>
</dbReference>
<dbReference type="FunFam" id="3.40.50.790:FF:000001">
    <property type="entry name" value="50S ribosomal protein L1"/>
    <property type="match status" value="1"/>
</dbReference>
<dbReference type="Gene3D" id="3.30.190.20">
    <property type="match status" value="1"/>
</dbReference>
<dbReference type="Gene3D" id="3.40.50.790">
    <property type="match status" value="1"/>
</dbReference>
<dbReference type="HAMAP" id="MF_01318_B">
    <property type="entry name" value="Ribosomal_uL1_B"/>
    <property type="match status" value="1"/>
</dbReference>
<dbReference type="InterPro" id="IPR005878">
    <property type="entry name" value="Ribosom_uL1_bac-type"/>
</dbReference>
<dbReference type="InterPro" id="IPR002143">
    <property type="entry name" value="Ribosomal_uL1"/>
</dbReference>
<dbReference type="InterPro" id="IPR023674">
    <property type="entry name" value="Ribosomal_uL1-like"/>
</dbReference>
<dbReference type="InterPro" id="IPR028364">
    <property type="entry name" value="Ribosomal_uL1/biogenesis"/>
</dbReference>
<dbReference type="InterPro" id="IPR016095">
    <property type="entry name" value="Ribosomal_uL1_3-a/b-sand"/>
</dbReference>
<dbReference type="InterPro" id="IPR023673">
    <property type="entry name" value="Ribosomal_uL1_CS"/>
</dbReference>
<dbReference type="NCBIfam" id="TIGR01169">
    <property type="entry name" value="rplA_bact"/>
    <property type="match status" value="1"/>
</dbReference>
<dbReference type="PANTHER" id="PTHR36427">
    <property type="entry name" value="54S RIBOSOMAL PROTEIN L1, MITOCHONDRIAL"/>
    <property type="match status" value="1"/>
</dbReference>
<dbReference type="PANTHER" id="PTHR36427:SF3">
    <property type="entry name" value="LARGE RIBOSOMAL SUBUNIT PROTEIN UL1M"/>
    <property type="match status" value="1"/>
</dbReference>
<dbReference type="Pfam" id="PF00687">
    <property type="entry name" value="Ribosomal_L1"/>
    <property type="match status" value="1"/>
</dbReference>
<dbReference type="PIRSF" id="PIRSF002155">
    <property type="entry name" value="Ribosomal_L1"/>
    <property type="match status" value="1"/>
</dbReference>
<dbReference type="SUPFAM" id="SSF56808">
    <property type="entry name" value="Ribosomal protein L1"/>
    <property type="match status" value="1"/>
</dbReference>
<dbReference type="PROSITE" id="PS01199">
    <property type="entry name" value="RIBOSOMAL_L1"/>
    <property type="match status" value="1"/>
</dbReference>